<accession>P06183</accession>
<proteinExistence type="evidence at transcript level"/>
<protein>
    <recommendedName>
        <fullName>Photosystem II 10 kDa polypeptide, chloroplastic</fullName>
    </recommendedName>
    <alternativeName>
        <fullName>Light-inducible tissue-specific ST-LS1 protein</fullName>
    </alternativeName>
</protein>
<evidence type="ECO:0000305" key="1"/>
<gene>
    <name type="primary">PSBR</name>
</gene>
<feature type="transit peptide" description="Chloroplast">
    <location>
        <begin position="1"/>
        <end position="39"/>
    </location>
</feature>
<feature type="chain" id="PRO_0000029364" description="Photosystem II 10 kDa polypeptide, chloroplastic">
    <location>
        <begin position="40"/>
        <end position="138"/>
    </location>
</feature>
<feature type="sequence conflict" description="In Ref. 1; CAA27989." evidence="1" ref="1">
    <original>S</original>
    <variation>P</variation>
    <location>
        <position position="34"/>
    </location>
</feature>
<feature type="sequence conflict" description="In Ref. 1; CAA27989." evidence="1" ref="1">
    <original>V</original>
    <variation>L</variation>
    <location>
        <position position="63"/>
    </location>
</feature>
<name>PSBR_SOLTU</name>
<dbReference type="EMBL" id="X04753">
    <property type="protein sequence ID" value="CAA28450.1"/>
    <property type="molecule type" value="Genomic_DNA"/>
</dbReference>
<dbReference type="EMBL" id="X04401">
    <property type="protein sequence ID" value="CAA27989.1"/>
    <property type="molecule type" value="mRNA"/>
</dbReference>
<dbReference type="PIR" id="S00411">
    <property type="entry name" value="S00411"/>
</dbReference>
<dbReference type="RefSeq" id="NP_001275173.1">
    <property type="nucleotide sequence ID" value="NM_001288244.1"/>
</dbReference>
<dbReference type="SMR" id="P06183"/>
<dbReference type="FunCoup" id="P06183">
    <property type="interactions" value="1306"/>
</dbReference>
<dbReference type="STRING" id="4113.P06183"/>
<dbReference type="PaxDb" id="4113-PGSC0003DMT400057257"/>
<dbReference type="EnsemblPlants" id="RHC07H1G2556.2.1">
    <property type="protein sequence ID" value="RHC07H1G2556.2.1"/>
    <property type="gene ID" value="RHC07H1G2556.2"/>
</dbReference>
<dbReference type="GeneID" id="102586254"/>
<dbReference type="Gramene" id="RHC07H1G2556.2.1">
    <property type="protein sequence ID" value="RHC07H1G2556.2.1"/>
    <property type="gene ID" value="RHC07H1G2556.2"/>
</dbReference>
<dbReference type="KEGG" id="sot:102586254"/>
<dbReference type="eggNOG" id="ENOG502RZG6">
    <property type="taxonomic scope" value="Eukaryota"/>
</dbReference>
<dbReference type="InParanoid" id="P06183"/>
<dbReference type="OrthoDB" id="496093at2759"/>
<dbReference type="Proteomes" id="UP000011115">
    <property type="component" value="Unassembled WGS sequence"/>
</dbReference>
<dbReference type="ExpressionAtlas" id="P06183">
    <property type="expression patterns" value="baseline"/>
</dbReference>
<dbReference type="GO" id="GO:0009535">
    <property type="term" value="C:chloroplast thylakoid membrane"/>
    <property type="evidence" value="ECO:0007669"/>
    <property type="project" value="UniProtKB-SubCell"/>
</dbReference>
<dbReference type="GO" id="GO:0009654">
    <property type="term" value="C:photosystem II oxygen evolving complex"/>
    <property type="evidence" value="ECO:0007669"/>
    <property type="project" value="InterPro"/>
</dbReference>
<dbReference type="GO" id="GO:0015979">
    <property type="term" value="P:photosynthesis"/>
    <property type="evidence" value="ECO:0007669"/>
    <property type="project" value="UniProtKB-KW"/>
</dbReference>
<dbReference type="InterPro" id="IPR006814">
    <property type="entry name" value="PSII_PsbR"/>
</dbReference>
<dbReference type="PANTHER" id="PTHR34369">
    <property type="entry name" value="PHOTOSYSTEM II 10 KDA POLYPEPTIDE, CHLOROPLASTIC"/>
    <property type="match status" value="1"/>
</dbReference>
<dbReference type="PANTHER" id="PTHR34369:SF2">
    <property type="entry name" value="PHOTOSYSTEM II 10 KDA POLYPEPTIDE, CHLOROPLASTIC"/>
    <property type="match status" value="1"/>
</dbReference>
<dbReference type="Pfam" id="PF04725">
    <property type="entry name" value="PsbR"/>
    <property type="match status" value="1"/>
</dbReference>
<organism>
    <name type="scientific">Solanum tuberosum</name>
    <name type="common">Potato</name>
    <dbReference type="NCBI Taxonomy" id="4113"/>
    <lineage>
        <taxon>Eukaryota</taxon>
        <taxon>Viridiplantae</taxon>
        <taxon>Streptophyta</taxon>
        <taxon>Embryophyta</taxon>
        <taxon>Tracheophyta</taxon>
        <taxon>Spermatophyta</taxon>
        <taxon>Magnoliopsida</taxon>
        <taxon>eudicotyledons</taxon>
        <taxon>Gunneridae</taxon>
        <taxon>Pentapetalae</taxon>
        <taxon>asterids</taxon>
        <taxon>lamiids</taxon>
        <taxon>Solanales</taxon>
        <taxon>Solanaceae</taxon>
        <taxon>Solanoideae</taxon>
        <taxon>Solaneae</taxon>
        <taxon>Solanum</taxon>
    </lineage>
</organism>
<reference key="1">
    <citation type="journal article" date="1986" name="Mol. Gen. Genet.">
        <title>Isolation and characterization of a light-inducible, organ-specific gene from potato and analysis of its expression after tagging and transfer into tobacco and potato shoots.</title>
        <authorList>
            <person name="Eckes P."/>
            <person name="Rosahl S."/>
            <person name="Schell J."/>
            <person name="Willmitzer L."/>
        </authorList>
    </citation>
    <scope>NUCLEOTIDE SEQUENCE</scope>
</reference>
<reference key="2">
    <citation type="journal article" date="2011" name="Nature">
        <title>Genome sequence and analysis of the tuber crop potato.</title>
        <authorList>
            <consortium name="The Potato Genome Sequencing Consortium"/>
        </authorList>
    </citation>
    <scope>NUCLEOTIDE SEQUENCE [LARGE SCALE GENOMIC DNA]</scope>
    <source>
        <strain>cv. DM1-3 516 R44</strain>
    </source>
</reference>
<sequence>MASTVMSSLSLKPTFTLEKTSVKGLPSLARSSSSFKVVASGVKKLKTDKPYGINGSMALRDGVDASGRKPKGKGVYQYVDKYGANVDGYSPIYNTDEWSPSGDVYVGGTTGLAIWAVTLVGILAGGALLVYNTSALAQ</sequence>
<comment type="function">
    <text>Associated with the oxygen-evolving complex of photosystem II.</text>
</comment>
<comment type="subcellular location">
    <subcellularLocation>
        <location>Plastid</location>
        <location>Chloroplast thylakoid membrane</location>
    </subcellularLocation>
    <text>Associated with the photosystem II complex.</text>
</comment>
<comment type="induction">
    <text>By light.</text>
</comment>
<comment type="similarity">
    <text evidence="1">Belongs to the psbR family.</text>
</comment>
<keyword id="KW-0150">Chloroplast</keyword>
<keyword id="KW-0472">Membrane</keyword>
<keyword id="KW-0602">Photosynthesis</keyword>
<keyword id="KW-0604">Photosystem II</keyword>
<keyword id="KW-0934">Plastid</keyword>
<keyword id="KW-1185">Reference proteome</keyword>
<keyword id="KW-0793">Thylakoid</keyword>
<keyword id="KW-0809">Transit peptide</keyword>